<gene>
    <name type="primary">gtaX</name>
    <name type="ORF">DDB_G0290665</name>
</gene>
<accession>Q54FV1</accession>
<name>GTAX_DICDI</name>
<reference key="1">
    <citation type="journal article" date="2005" name="Nature">
        <title>The genome of the social amoeba Dictyostelium discoideum.</title>
        <authorList>
            <person name="Eichinger L."/>
            <person name="Pachebat J.A."/>
            <person name="Gloeckner G."/>
            <person name="Rajandream M.A."/>
            <person name="Sucgang R."/>
            <person name="Berriman M."/>
            <person name="Song J."/>
            <person name="Olsen R."/>
            <person name="Szafranski K."/>
            <person name="Xu Q."/>
            <person name="Tunggal B."/>
            <person name="Kummerfeld S."/>
            <person name="Madera M."/>
            <person name="Konfortov B.A."/>
            <person name="Rivero F."/>
            <person name="Bankier A.T."/>
            <person name="Lehmann R."/>
            <person name="Hamlin N."/>
            <person name="Davies R."/>
            <person name="Gaudet P."/>
            <person name="Fey P."/>
            <person name="Pilcher K."/>
            <person name="Chen G."/>
            <person name="Saunders D."/>
            <person name="Sodergren E.J."/>
            <person name="Davis P."/>
            <person name="Kerhornou A."/>
            <person name="Nie X."/>
            <person name="Hall N."/>
            <person name="Anjard C."/>
            <person name="Hemphill L."/>
            <person name="Bason N."/>
            <person name="Farbrother P."/>
            <person name="Desany B."/>
            <person name="Just E."/>
            <person name="Morio T."/>
            <person name="Rost R."/>
            <person name="Churcher C.M."/>
            <person name="Cooper J."/>
            <person name="Haydock S."/>
            <person name="van Driessche N."/>
            <person name="Cronin A."/>
            <person name="Goodhead I."/>
            <person name="Muzny D.M."/>
            <person name="Mourier T."/>
            <person name="Pain A."/>
            <person name="Lu M."/>
            <person name="Harper D."/>
            <person name="Lindsay R."/>
            <person name="Hauser H."/>
            <person name="James K.D."/>
            <person name="Quiles M."/>
            <person name="Madan Babu M."/>
            <person name="Saito T."/>
            <person name="Buchrieser C."/>
            <person name="Wardroper A."/>
            <person name="Felder M."/>
            <person name="Thangavelu M."/>
            <person name="Johnson D."/>
            <person name="Knights A."/>
            <person name="Loulseged H."/>
            <person name="Mungall K.L."/>
            <person name="Oliver K."/>
            <person name="Price C."/>
            <person name="Quail M.A."/>
            <person name="Urushihara H."/>
            <person name="Hernandez J."/>
            <person name="Rabbinowitsch E."/>
            <person name="Steffen D."/>
            <person name="Sanders M."/>
            <person name="Ma J."/>
            <person name="Kohara Y."/>
            <person name="Sharp S."/>
            <person name="Simmonds M.N."/>
            <person name="Spiegler S."/>
            <person name="Tivey A."/>
            <person name="Sugano S."/>
            <person name="White B."/>
            <person name="Walker D."/>
            <person name="Woodward J.R."/>
            <person name="Winckler T."/>
            <person name="Tanaka Y."/>
            <person name="Shaulsky G."/>
            <person name="Schleicher M."/>
            <person name="Weinstock G.M."/>
            <person name="Rosenthal A."/>
            <person name="Cox E.C."/>
            <person name="Chisholm R.L."/>
            <person name="Gibbs R.A."/>
            <person name="Loomis W.F."/>
            <person name="Platzer M."/>
            <person name="Kay R.R."/>
            <person name="Williams J.G."/>
            <person name="Dear P.H."/>
            <person name="Noegel A.A."/>
            <person name="Barrell B.G."/>
            <person name="Kuspa A."/>
        </authorList>
    </citation>
    <scope>NUCLEOTIDE SEQUENCE [LARGE SCALE GENOMIC DNA]</scope>
    <source>
        <strain>AX4</strain>
    </source>
</reference>
<evidence type="ECO:0000255" key="1">
    <source>
        <dbReference type="PROSITE-ProRule" id="PRU00094"/>
    </source>
</evidence>
<evidence type="ECO:0000256" key="2">
    <source>
        <dbReference type="SAM" id="MobiDB-lite"/>
    </source>
</evidence>
<proteinExistence type="predicted"/>
<sequence length="349" mass="39590">MISSKLNNNYYNNPFTFNNNSNTISVTQKEALKKTIKEAAVLTDIALVNLNNDGPSLEISALIESKCKQLYEYSTTNTITIYNLLNYNNNNNYNNINRYNNNNSPSNNNNNNNNNNNNNNNNNNNNNSNNNNNNNNINNNNNSNNNNINNNNNNNSENNCNNNFNVNKNLDNDKYNNKSCKNNNINNNNNNNNNSENKEKNNINNNNEKENNEYNNNRSASTSPVIKRSKSLSPILQFDKIDLEEEYTSDYDYSDGSNESSSPTLSASTLSSEDSKPKVLKRGRGRPSKPKPVQCFSCFRSNTPEWRKGKDKDGNVIDLCNACGLSYMKYIKKAKESKDKLSINNLINK</sequence>
<feature type="chain" id="PRO_0000330457" description="GATA zinc finger domain-containing protein 24">
    <location>
        <begin position="1"/>
        <end position="349"/>
    </location>
</feature>
<feature type="zinc finger region" description="GATA-type" evidence="1">
    <location>
        <begin position="295"/>
        <end position="323"/>
    </location>
</feature>
<feature type="region of interest" description="Disordered" evidence="2">
    <location>
        <begin position="95"/>
        <end position="227"/>
    </location>
</feature>
<feature type="region of interest" description="Disordered" evidence="2">
    <location>
        <begin position="250"/>
        <end position="294"/>
    </location>
</feature>
<feature type="compositionally biased region" description="Low complexity" evidence="2">
    <location>
        <begin position="95"/>
        <end position="169"/>
    </location>
</feature>
<feature type="compositionally biased region" description="Low complexity" evidence="2">
    <location>
        <begin position="177"/>
        <end position="195"/>
    </location>
</feature>
<feature type="compositionally biased region" description="Basic and acidic residues" evidence="2">
    <location>
        <begin position="196"/>
        <end position="212"/>
    </location>
</feature>
<feature type="compositionally biased region" description="Low complexity" evidence="2">
    <location>
        <begin position="257"/>
        <end position="272"/>
    </location>
</feature>
<feature type="compositionally biased region" description="Basic residues" evidence="2">
    <location>
        <begin position="278"/>
        <end position="289"/>
    </location>
</feature>
<keyword id="KW-0479">Metal-binding</keyword>
<keyword id="KW-1185">Reference proteome</keyword>
<keyword id="KW-0862">Zinc</keyword>
<keyword id="KW-0863">Zinc-finger</keyword>
<organism>
    <name type="scientific">Dictyostelium discoideum</name>
    <name type="common">Social amoeba</name>
    <dbReference type="NCBI Taxonomy" id="44689"/>
    <lineage>
        <taxon>Eukaryota</taxon>
        <taxon>Amoebozoa</taxon>
        <taxon>Evosea</taxon>
        <taxon>Eumycetozoa</taxon>
        <taxon>Dictyostelia</taxon>
        <taxon>Dictyosteliales</taxon>
        <taxon>Dictyosteliaceae</taxon>
        <taxon>Dictyostelium</taxon>
    </lineage>
</organism>
<protein>
    <recommendedName>
        <fullName>GATA zinc finger domain-containing protein 24</fullName>
    </recommendedName>
</protein>
<dbReference type="EMBL" id="AAFI02000164">
    <property type="protein sequence ID" value="EAL62193.2"/>
    <property type="molecule type" value="Genomic_DNA"/>
</dbReference>
<dbReference type="RefSeq" id="XP_635666.2">
    <property type="nucleotide sequence ID" value="XM_630574.2"/>
</dbReference>
<dbReference type="PaxDb" id="44689-DDB0219994"/>
<dbReference type="EnsemblProtists" id="EAL62193">
    <property type="protein sequence ID" value="EAL62193"/>
    <property type="gene ID" value="DDB_G0290665"/>
</dbReference>
<dbReference type="GeneID" id="8627738"/>
<dbReference type="KEGG" id="ddi:DDB_G0290665"/>
<dbReference type="dictyBase" id="DDB_G0290665">
    <property type="gene designation" value="gtaX"/>
</dbReference>
<dbReference type="VEuPathDB" id="AmoebaDB:DDB_G0290665"/>
<dbReference type="HOGENOM" id="CLU_795526_0_0_1"/>
<dbReference type="InParanoid" id="Q54FV1"/>
<dbReference type="OMA" id="HENPNRF"/>
<dbReference type="PRO" id="PR:Q54FV1"/>
<dbReference type="Proteomes" id="UP000002195">
    <property type="component" value="Chromosome 5"/>
</dbReference>
<dbReference type="GO" id="GO:0005634">
    <property type="term" value="C:nucleus"/>
    <property type="evidence" value="ECO:0000318"/>
    <property type="project" value="GO_Central"/>
</dbReference>
<dbReference type="GO" id="GO:0000981">
    <property type="term" value="F:DNA-binding transcription factor activity, RNA polymerase II-specific"/>
    <property type="evidence" value="ECO:0000318"/>
    <property type="project" value="GO_Central"/>
</dbReference>
<dbReference type="GO" id="GO:0000978">
    <property type="term" value="F:RNA polymerase II cis-regulatory region sequence-specific DNA binding"/>
    <property type="evidence" value="ECO:0000318"/>
    <property type="project" value="GO_Central"/>
</dbReference>
<dbReference type="GO" id="GO:0008270">
    <property type="term" value="F:zinc ion binding"/>
    <property type="evidence" value="ECO:0007669"/>
    <property type="project" value="UniProtKB-KW"/>
</dbReference>
<dbReference type="GO" id="GO:0000122">
    <property type="term" value="P:negative regulation of transcription by RNA polymerase II"/>
    <property type="evidence" value="ECO:0000318"/>
    <property type="project" value="GO_Central"/>
</dbReference>
<dbReference type="GO" id="GO:0045944">
    <property type="term" value="P:positive regulation of transcription by RNA polymerase II"/>
    <property type="evidence" value="ECO:0000318"/>
    <property type="project" value="GO_Central"/>
</dbReference>
<dbReference type="CDD" id="cd00202">
    <property type="entry name" value="ZnF_GATA"/>
    <property type="match status" value="1"/>
</dbReference>
<dbReference type="Gene3D" id="3.30.50.10">
    <property type="entry name" value="Erythroid Transcription Factor GATA-1, subunit A"/>
    <property type="match status" value="1"/>
</dbReference>
<dbReference type="InterPro" id="IPR000679">
    <property type="entry name" value="Znf_GATA"/>
</dbReference>
<dbReference type="InterPro" id="IPR013088">
    <property type="entry name" value="Znf_NHR/GATA"/>
</dbReference>
<dbReference type="Pfam" id="PF00320">
    <property type="entry name" value="GATA"/>
    <property type="match status" value="1"/>
</dbReference>
<dbReference type="SMART" id="SM00401">
    <property type="entry name" value="ZnF_GATA"/>
    <property type="match status" value="1"/>
</dbReference>
<dbReference type="SUPFAM" id="SSF57716">
    <property type="entry name" value="Glucocorticoid receptor-like (DNA-binding domain)"/>
    <property type="match status" value="1"/>
</dbReference>
<dbReference type="PROSITE" id="PS50114">
    <property type="entry name" value="GATA_ZN_FINGER_2"/>
    <property type="match status" value="1"/>
</dbReference>